<reference key="1">
    <citation type="journal article" date="1996" name="Biochim. Biophys. Acta">
        <title>A cDNA encoding a putative 37 kDa leucine-rich repeat (LRR) protein, p37NB, isolated from S-type neuroblastoma cell has a differential tissue distribution.</title>
        <authorList>
            <person name="Kim D."/>
            <person name="LaQuaglia M.P."/>
            <person name="Yang S.Y."/>
        </authorList>
    </citation>
    <scope>NUCLEOTIDE SEQUENCE [MRNA] (ISOFORM 2)</scope>
    <scope>TISSUE SPECIFICITY</scope>
    <scope>VARIANT ALA-187</scope>
</reference>
<reference key="2">
    <citation type="journal article" date="2003" name="Genome Res.">
        <title>The secreted protein discovery initiative (SPDI), a large-scale effort to identify novel human secreted and transmembrane proteins: a bioinformatics assessment.</title>
        <authorList>
            <person name="Clark H.F."/>
            <person name="Gurney A.L."/>
            <person name="Abaya E."/>
            <person name="Baker K."/>
            <person name="Baldwin D.T."/>
            <person name="Brush J."/>
            <person name="Chen J."/>
            <person name="Chow B."/>
            <person name="Chui C."/>
            <person name="Crowley C."/>
            <person name="Currell B."/>
            <person name="Deuel B."/>
            <person name="Dowd P."/>
            <person name="Eaton D."/>
            <person name="Foster J.S."/>
            <person name="Grimaldi C."/>
            <person name="Gu Q."/>
            <person name="Hass P.E."/>
            <person name="Heldens S."/>
            <person name="Huang A."/>
            <person name="Kim H.S."/>
            <person name="Klimowski L."/>
            <person name="Jin Y."/>
            <person name="Johnson S."/>
            <person name="Lee J."/>
            <person name="Lewis L."/>
            <person name="Liao D."/>
            <person name="Mark M.R."/>
            <person name="Robbie E."/>
            <person name="Sanchez C."/>
            <person name="Schoenfeld J."/>
            <person name="Seshagiri S."/>
            <person name="Simmons L."/>
            <person name="Singh J."/>
            <person name="Smith V."/>
            <person name="Stinson J."/>
            <person name="Vagts A."/>
            <person name="Vandlen R.L."/>
            <person name="Watanabe C."/>
            <person name="Wieand D."/>
            <person name="Woods K."/>
            <person name="Xie M.-H."/>
            <person name="Yansura D.G."/>
            <person name="Yi S."/>
            <person name="Yu G."/>
            <person name="Yuan J."/>
            <person name="Zhang M."/>
            <person name="Zhang Z."/>
            <person name="Goddard A.D."/>
            <person name="Wood W.I."/>
            <person name="Godowski P.J."/>
            <person name="Gray A.M."/>
        </authorList>
    </citation>
    <scope>NUCLEOTIDE SEQUENCE [LARGE SCALE MRNA] (ISOFORM 1)</scope>
</reference>
<reference key="3">
    <citation type="journal article" date="2003" name="Nature">
        <title>The DNA sequence of human chromosome 7.</title>
        <authorList>
            <person name="Hillier L.W."/>
            <person name="Fulton R.S."/>
            <person name="Fulton L.A."/>
            <person name="Graves T.A."/>
            <person name="Pepin K.H."/>
            <person name="Wagner-McPherson C."/>
            <person name="Layman D."/>
            <person name="Maas J."/>
            <person name="Jaeger S."/>
            <person name="Walker R."/>
            <person name="Wylie K."/>
            <person name="Sekhon M."/>
            <person name="Becker M.C."/>
            <person name="O'Laughlin M.D."/>
            <person name="Schaller M.E."/>
            <person name="Fewell G.A."/>
            <person name="Delehaunty K.D."/>
            <person name="Miner T.L."/>
            <person name="Nash W.E."/>
            <person name="Cordes M."/>
            <person name="Du H."/>
            <person name="Sun H."/>
            <person name="Edwards J."/>
            <person name="Bradshaw-Cordum H."/>
            <person name="Ali J."/>
            <person name="Andrews S."/>
            <person name="Isak A."/>
            <person name="Vanbrunt A."/>
            <person name="Nguyen C."/>
            <person name="Du F."/>
            <person name="Lamar B."/>
            <person name="Courtney L."/>
            <person name="Kalicki J."/>
            <person name="Ozersky P."/>
            <person name="Bielicki L."/>
            <person name="Scott K."/>
            <person name="Holmes A."/>
            <person name="Harkins R."/>
            <person name="Harris A."/>
            <person name="Strong C.M."/>
            <person name="Hou S."/>
            <person name="Tomlinson C."/>
            <person name="Dauphin-Kohlberg S."/>
            <person name="Kozlowicz-Reilly A."/>
            <person name="Leonard S."/>
            <person name="Rohlfing T."/>
            <person name="Rock S.M."/>
            <person name="Tin-Wollam A.-M."/>
            <person name="Abbott A."/>
            <person name="Minx P."/>
            <person name="Maupin R."/>
            <person name="Strowmatt C."/>
            <person name="Latreille P."/>
            <person name="Miller N."/>
            <person name="Johnson D."/>
            <person name="Murray J."/>
            <person name="Woessner J.P."/>
            <person name="Wendl M.C."/>
            <person name="Yang S.-P."/>
            <person name="Schultz B.R."/>
            <person name="Wallis J.W."/>
            <person name="Spieth J."/>
            <person name="Bieri T.A."/>
            <person name="Nelson J.O."/>
            <person name="Berkowicz N."/>
            <person name="Wohldmann P.E."/>
            <person name="Cook L.L."/>
            <person name="Hickenbotham M.T."/>
            <person name="Eldred J."/>
            <person name="Williams D."/>
            <person name="Bedell J.A."/>
            <person name="Mardis E.R."/>
            <person name="Clifton S.W."/>
            <person name="Chissoe S.L."/>
            <person name="Marra M.A."/>
            <person name="Raymond C."/>
            <person name="Haugen E."/>
            <person name="Gillett W."/>
            <person name="Zhou Y."/>
            <person name="James R."/>
            <person name="Phelps K."/>
            <person name="Iadanoto S."/>
            <person name="Bubb K."/>
            <person name="Simms E."/>
            <person name="Levy R."/>
            <person name="Clendenning J."/>
            <person name="Kaul R."/>
            <person name="Kent W.J."/>
            <person name="Furey T.S."/>
            <person name="Baertsch R.A."/>
            <person name="Brent M.R."/>
            <person name="Keibler E."/>
            <person name="Flicek P."/>
            <person name="Bork P."/>
            <person name="Suyama M."/>
            <person name="Bailey J.A."/>
            <person name="Portnoy M.E."/>
            <person name="Torrents D."/>
            <person name="Chinwalla A.T."/>
            <person name="Gish W.R."/>
            <person name="Eddy S.R."/>
            <person name="McPherson J.D."/>
            <person name="Olson M.V."/>
            <person name="Eichler E.E."/>
            <person name="Green E.D."/>
            <person name="Waterston R.H."/>
            <person name="Wilson R.K."/>
        </authorList>
    </citation>
    <scope>NUCLEOTIDE SEQUENCE [LARGE SCALE GENOMIC DNA] (ISOFORM 2)</scope>
</reference>
<reference key="4">
    <citation type="journal article" date="2004" name="Genome Res.">
        <title>The status, quality, and expansion of the NIH full-length cDNA project: the Mammalian Gene Collection (MGC).</title>
        <authorList>
            <consortium name="The MGC Project Team"/>
        </authorList>
    </citation>
    <scope>NUCLEOTIDE SEQUENCE [LARGE SCALE MRNA] (ISOFORM 1)</scope>
    <source>
        <tissue>Pancreas</tissue>
    </source>
</reference>
<reference key="5">
    <citation type="journal article" date="2009" name="J. Biol. Chem.">
        <title>Identification of LRRc17 as a negative regulator of receptor activator of NF-kappaB ligand (RANKL)-induced osteoclast differentiation.</title>
        <authorList>
            <person name="Kim T."/>
            <person name="Kim K."/>
            <person name="Lee S.H."/>
            <person name="So H.-S."/>
            <person name="Lee J."/>
            <person name="Kim N."/>
            <person name="Choi Y."/>
        </authorList>
    </citation>
    <scope>TISSUE SPECIFICITY</scope>
</reference>
<evidence type="ECO:0000250" key="1"/>
<evidence type="ECO:0000255" key="2"/>
<evidence type="ECO:0000269" key="3">
    <source>
    </source>
</evidence>
<evidence type="ECO:0000269" key="4">
    <source>
    </source>
</evidence>
<evidence type="ECO:0000303" key="5">
    <source>
    </source>
</evidence>
<evidence type="ECO:0000305" key="6"/>
<protein>
    <recommendedName>
        <fullName>Leucine-rich repeat-containing protein 17</fullName>
    </recommendedName>
    <alternativeName>
        <fullName>p37NB</fullName>
    </alternativeName>
</protein>
<dbReference type="EMBL" id="U32907">
    <property type="protein sequence ID" value="AAB41565.1"/>
    <property type="molecule type" value="mRNA"/>
</dbReference>
<dbReference type="EMBL" id="AY358889">
    <property type="protein sequence ID" value="AAQ89248.1"/>
    <property type="molecule type" value="mRNA"/>
</dbReference>
<dbReference type="EMBL" id="AC073127">
    <property type="protein sequence ID" value="AAS07483.1"/>
    <property type="molecule type" value="Genomic_DNA"/>
</dbReference>
<dbReference type="EMBL" id="BC027903">
    <property type="protein sequence ID" value="AAH27903.1"/>
    <property type="molecule type" value="mRNA"/>
</dbReference>
<dbReference type="CCDS" id="CCDS34721.1">
    <molecule id="Q8N6Y2-1"/>
</dbReference>
<dbReference type="CCDS" id="CCDS5727.1">
    <molecule id="Q8N6Y2-2"/>
</dbReference>
<dbReference type="PIR" id="G02020">
    <property type="entry name" value="G02020"/>
</dbReference>
<dbReference type="RefSeq" id="NP_001026862.1">
    <molecule id="Q8N6Y2-1"/>
    <property type="nucleotide sequence ID" value="NM_001031692.3"/>
</dbReference>
<dbReference type="RefSeq" id="NP_005815.2">
    <molecule id="Q8N6Y2-2"/>
    <property type="nucleotide sequence ID" value="NM_005824.3"/>
</dbReference>
<dbReference type="RefSeq" id="XP_005250165.1">
    <molecule id="Q8N6Y2-1"/>
    <property type="nucleotide sequence ID" value="XM_005250108.2"/>
</dbReference>
<dbReference type="RefSeq" id="XP_047275673.1">
    <molecule id="Q8N6Y2-1"/>
    <property type="nucleotide sequence ID" value="XM_047419717.1"/>
</dbReference>
<dbReference type="SMR" id="Q8N6Y2"/>
<dbReference type="BioGRID" id="115528">
    <property type="interactions" value="23"/>
</dbReference>
<dbReference type="FunCoup" id="Q8N6Y2">
    <property type="interactions" value="151"/>
</dbReference>
<dbReference type="IntAct" id="Q8N6Y2">
    <property type="interactions" value="20"/>
</dbReference>
<dbReference type="STRING" id="9606.ENSP00000344242"/>
<dbReference type="GlyCosmos" id="Q8N6Y2">
    <property type="glycosylation" value="1 site, 1 glycan"/>
</dbReference>
<dbReference type="GlyGen" id="Q8N6Y2">
    <property type="glycosylation" value="2 sites, 2 O-linked glycans (2 sites)"/>
</dbReference>
<dbReference type="iPTMnet" id="Q8N6Y2"/>
<dbReference type="PhosphoSitePlus" id="Q8N6Y2"/>
<dbReference type="BioMuta" id="LRRC17"/>
<dbReference type="DMDM" id="51701682"/>
<dbReference type="jPOST" id="Q8N6Y2"/>
<dbReference type="MassIVE" id="Q8N6Y2"/>
<dbReference type="PaxDb" id="9606-ENSP00000344242"/>
<dbReference type="PeptideAtlas" id="Q8N6Y2"/>
<dbReference type="ProteomicsDB" id="72249">
    <molecule id="Q8N6Y2-1"/>
</dbReference>
<dbReference type="ProteomicsDB" id="72250">
    <molecule id="Q8N6Y2-2"/>
</dbReference>
<dbReference type="Antibodypedia" id="31152">
    <property type="antibodies" value="52 antibodies from 15 providers"/>
</dbReference>
<dbReference type="DNASU" id="10234"/>
<dbReference type="Ensembl" id="ENST00000249377.4">
    <molecule id="Q8N6Y2-2"/>
    <property type="protein sequence ID" value="ENSP00000249377.4"/>
    <property type="gene ID" value="ENSG00000128606.13"/>
</dbReference>
<dbReference type="Ensembl" id="ENST00000339431.9">
    <molecule id="Q8N6Y2-1"/>
    <property type="protein sequence ID" value="ENSP00000344242.4"/>
    <property type="gene ID" value="ENSG00000128606.13"/>
</dbReference>
<dbReference type="GeneID" id="10234"/>
<dbReference type="KEGG" id="hsa:10234"/>
<dbReference type="MANE-Select" id="ENST00000339431.9">
    <property type="protein sequence ID" value="ENSP00000344242.4"/>
    <property type="RefSeq nucleotide sequence ID" value="NM_001031692.3"/>
    <property type="RefSeq protein sequence ID" value="NP_001026862.1"/>
</dbReference>
<dbReference type="UCSC" id="uc003vat.4">
    <molecule id="Q8N6Y2-1"/>
    <property type="organism name" value="human"/>
</dbReference>
<dbReference type="AGR" id="HGNC:16895"/>
<dbReference type="CTD" id="10234"/>
<dbReference type="DisGeNET" id="10234"/>
<dbReference type="GeneCards" id="LRRC17"/>
<dbReference type="HGNC" id="HGNC:16895">
    <property type="gene designation" value="LRRC17"/>
</dbReference>
<dbReference type="HPA" id="ENSG00000128606">
    <property type="expression patterns" value="Tissue enhanced (ovary)"/>
</dbReference>
<dbReference type="MIM" id="618749">
    <property type="type" value="gene"/>
</dbReference>
<dbReference type="neXtProt" id="NX_Q8N6Y2"/>
<dbReference type="OpenTargets" id="ENSG00000128606"/>
<dbReference type="PharmGKB" id="PA134866295"/>
<dbReference type="VEuPathDB" id="HostDB:ENSG00000128606"/>
<dbReference type="eggNOG" id="KOG0619">
    <property type="taxonomic scope" value="Eukaryota"/>
</dbReference>
<dbReference type="GeneTree" id="ENSGT00940000156400"/>
<dbReference type="HOGENOM" id="CLU_049990_0_0_1"/>
<dbReference type="InParanoid" id="Q8N6Y2"/>
<dbReference type="OMA" id="LHYFQYG"/>
<dbReference type="OrthoDB" id="1741314at2759"/>
<dbReference type="PAN-GO" id="Q8N6Y2">
    <property type="GO annotations" value="2 GO annotations based on evolutionary models"/>
</dbReference>
<dbReference type="PhylomeDB" id="Q8N6Y2"/>
<dbReference type="PathwayCommons" id="Q8N6Y2"/>
<dbReference type="BioGRID-ORCS" id="10234">
    <property type="hits" value="13 hits in 1139 CRISPR screens"/>
</dbReference>
<dbReference type="ChiTaRS" id="LRRC17">
    <property type="organism name" value="human"/>
</dbReference>
<dbReference type="GeneWiki" id="LRRC17"/>
<dbReference type="GenomeRNAi" id="10234"/>
<dbReference type="Pharos" id="Q8N6Y2">
    <property type="development level" value="Tdark"/>
</dbReference>
<dbReference type="PRO" id="PR:Q8N6Y2"/>
<dbReference type="Proteomes" id="UP000005640">
    <property type="component" value="Chromosome 7"/>
</dbReference>
<dbReference type="RNAct" id="Q8N6Y2">
    <property type="molecule type" value="protein"/>
</dbReference>
<dbReference type="Bgee" id="ENSG00000128606">
    <property type="expression patterns" value="Expressed in secondary oocyte and 164 other cell types or tissues"/>
</dbReference>
<dbReference type="ExpressionAtlas" id="Q8N6Y2">
    <property type="expression patterns" value="baseline and differential"/>
</dbReference>
<dbReference type="GO" id="GO:0031012">
    <property type="term" value="C:extracellular matrix"/>
    <property type="evidence" value="ECO:0000318"/>
    <property type="project" value="GO_Central"/>
</dbReference>
<dbReference type="GO" id="GO:0005615">
    <property type="term" value="C:extracellular space"/>
    <property type="evidence" value="ECO:0000250"/>
    <property type="project" value="UniProtKB"/>
</dbReference>
<dbReference type="GO" id="GO:0048539">
    <property type="term" value="P:bone marrow development"/>
    <property type="evidence" value="ECO:0000250"/>
    <property type="project" value="UniProtKB"/>
</dbReference>
<dbReference type="GO" id="GO:0045671">
    <property type="term" value="P:negative regulation of osteoclast differentiation"/>
    <property type="evidence" value="ECO:0000250"/>
    <property type="project" value="UniProtKB"/>
</dbReference>
<dbReference type="GO" id="GO:0001503">
    <property type="term" value="P:ossification"/>
    <property type="evidence" value="ECO:0007669"/>
    <property type="project" value="UniProtKB-KW"/>
</dbReference>
<dbReference type="FunFam" id="3.80.10.10:FF:000098">
    <property type="entry name" value="leucine-rich repeat-containing protein 17"/>
    <property type="match status" value="1"/>
</dbReference>
<dbReference type="FunFam" id="3.80.10.10:FF:000117">
    <property type="entry name" value="leucine-rich repeat-containing protein 17"/>
    <property type="match status" value="1"/>
</dbReference>
<dbReference type="Gene3D" id="3.80.10.10">
    <property type="entry name" value="Ribonuclease Inhibitor"/>
    <property type="match status" value="2"/>
</dbReference>
<dbReference type="InterPro" id="IPR000483">
    <property type="entry name" value="Cys-rich_flank_reg_C"/>
</dbReference>
<dbReference type="InterPro" id="IPR001611">
    <property type="entry name" value="Leu-rich_rpt"/>
</dbReference>
<dbReference type="InterPro" id="IPR003591">
    <property type="entry name" value="Leu-rich_rpt_typical-subtyp"/>
</dbReference>
<dbReference type="InterPro" id="IPR032675">
    <property type="entry name" value="LRR_dom_sf"/>
</dbReference>
<dbReference type="InterPro" id="IPR050541">
    <property type="entry name" value="LRR_TM_domain-containing"/>
</dbReference>
<dbReference type="PANTHER" id="PTHR24369">
    <property type="entry name" value="ANTIGEN BSP, PUTATIVE-RELATED"/>
    <property type="match status" value="1"/>
</dbReference>
<dbReference type="PANTHER" id="PTHR24369:SF210">
    <property type="entry name" value="CHAOPTIN-RELATED"/>
    <property type="match status" value="1"/>
</dbReference>
<dbReference type="Pfam" id="PF13855">
    <property type="entry name" value="LRR_8"/>
    <property type="match status" value="2"/>
</dbReference>
<dbReference type="PRINTS" id="PR00019">
    <property type="entry name" value="LEURICHRPT"/>
</dbReference>
<dbReference type="SMART" id="SM00365">
    <property type="entry name" value="LRR_SD22"/>
    <property type="match status" value="3"/>
</dbReference>
<dbReference type="SMART" id="SM00369">
    <property type="entry name" value="LRR_TYP"/>
    <property type="match status" value="6"/>
</dbReference>
<dbReference type="SMART" id="SM00082">
    <property type="entry name" value="LRRCT"/>
    <property type="match status" value="2"/>
</dbReference>
<dbReference type="SUPFAM" id="SSF52058">
    <property type="entry name" value="L domain-like"/>
    <property type="match status" value="1"/>
</dbReference>
<dbReference type="PROSITE" id="PS51450">
    <property type="entry name" value="LRR"/>
    <property type="match status" value="6"/>
</dbReference>
<accession>Q8N6Y2</accession>
<accession>Q13288</accession>
<accession>Q6UWA7</accession>
<accession>Q75MG5</accession>
<sequence length="441" mass="51800">MRVVTIVILLCFCKAAELRKASPGSVRSRVNHGRAGGGRRGSNPVKRYAPGLPCDVYTYLHEKYLDCQERKLVYVLPGWPQDLLHMLLARNKIRTLKNNMFSKFKKLKSLDLQQNEISKIESEAFFGLNKLTTLLLQHNQIKVLTEEVFIYTPLLSYLRLYDNPWHCTCEIETLISMLQIPRNRNLGNYAKCESPQEQKNKKLRQIKSEQLCNEEEKEQLDPKPQVSGRPPVIKPEVDSTFCHNYVFPIQTLDCKRKELKKVPNNIPPDIVKLDLSYNKINQLRPKEFEDVHELKKLNLSSNGIEFIDPAAFLGLTHLEELDLSNNSLQNFDYGVLEDLYFLKLLWLRDNPWRCDYNIHYLYYWLKHHYNVHFNGLECKTPEEYKGWSVGKYIRSYYEECPKDKLPAYPESFDQDTEDDEWEKKHRDHTAKKQSVIITIVG</sequence>
<proteinExistence type="evidence at protein level"/>
<gene>
    <name type="primary">LRRC17</name>
    <name type="synonym">P37NB</name>
    <name type="ORF">UNQ3076/PRO9909</name>
</gene>
<comment type="function">
    <text evidence="1">Involved in bone homeostasis. Acts as a negative regulator of RANKL-induced osteoclast precursor differentiation from bone marrow precursors (By similarity).</text>
</comment>
<comment type="subcellular location">
    <subcellularLocation>
        <location evidence="1">Secreted</location>
        <location evidence="1">Extracellular space</location>
    </subcellularLocation>
</comment>
<comment type="alternative products">
    <event type="alternative splicing"/>
    <isoform>
        <id>Q8N6Y2-1</id>
        <name>1</name>
        <sequence type="displayed"/>
    </isoform>
    <isoform>
        <id>Q8N6Y2-2</id>
        <name>2</name>
        <sequence type="described" ref="VSP_011424 VSP_011425"/>
    </isoform>
</comment>
<comment type="tissue specificity">
    <text evidence="3 4">Expressed in osteoblast cell lines. Well expressed in ovary, heart, pancreas, skeletal muscle, lung, and fetal kidney and lung and only at the basal levels in the other tissues examined including adult kidney. More expressed in S-type neuroblastoma cells than in N-type neuroblastoma cells.</text>
</comment>
<keyword id="KW-0025">Alternative splicing</keyword>
<keyword id="KW-0433">Leucine-rich repeat</keyword>
<keyword id="KW-0892">Osteogenesis</keyword>
<keyword id="KW-1267">Proteomics identification</keyword>
<keyword id="KW-1185">Reference proteome</keyword>
<keyword id="KW-0677">Repeat</keyword>
<keyword id="KW-0964">Secreted</keyword>
<keyword id="KW-0732">Signal</keyword>
<organism>
    <name type="scientific">Homo sapiens</name>
    <name type="common">Human</name>
    <dbReference type="NCBI Taxonomy" id="9606"/>
    <lineage>
        <taxon>Eukaryota</taxon>
        <taxon>Metazoa</taxon>
        <taxon>Chordata</taxon>
        <taxon>Craniata</taxon>
        <taxon>Vertebrata</taxon>
        <taxon>Euteleostomi</taxon>
        <taxon>Mammalia</taxon>
        <taxon>Eutheria</taxon>
        <taxon>Euarchontoglires</taxon>
        <taxon>Primates</taxon>
        <taxon>Haplorrhini</taxon>
        <taxon>Catarrhini</taxon>
        <taxon>Hominidae</taxon>
        <taxon>Homo</taxon>
    </lineage>
</organism>
<name>LRC17_HUMAN</name>
<feature type="signal peptide" evidence="2">
    <location>
        <begin position="1"/>
        <end position="18"/>
    </location>
</feature>
<feature type="chain" id="PRO_0000021608" description="Leucine-rich repeat-containing protein 17">
    <location>
        <begin position="19"/>
        <end position="441"/>
    </location>
</feature>
<feature type="repeat" description="LRR 1">
    <location>
        <begin position="82"/>
        <end position="103"/>
    </location>
</feature>
<feature type="repeat" description="LRR 2">
    <location>
        <begin position="106"/>
        <end position="127"/>
    </location>
</feature>
<feature type="repeat" description="LRR 3">
    <location>
        <begin position="130"/>
        <end position="151"/>
    </location>
</feature>
<feature type="domain" description="LRRCT 1">
    <location>
        <begin position="163"/>
        <end position="214"/>
    </location>
</feature>
<feature type="domain" description="LRRNT">
    <location>
        <begin position="225"/>
        <end position="268"/>
    </location>
</feature>
<feature type="repeat" description="LRR 4">
    <location>
        <begin position="269"/>
        <end position="290"/>
    </location>
</feature>
<feature type="repeat" description="LRR 5">
    <location>
        <begin position="293"/>
        <end position="314"/>
    </location>
</feature>
<feature type="repeat" description="LRR 6">
    <location>
        <begin position="317"/>
        <end position="340"/>
    </location>
</feature>
<feature type="domain" description="LRRCT 2">
    <location>
        <begin position="350"/>
        <end position="402"/>
    </location>
</feature>
<feature type="splice variant" id="VSP_011424" description="In isoform 2." evidence="5">
    <original>AAFL</original>
    <variation>GSLR</variation>
    <location>
        <begin position="310"/>
        <end position="313"/>
    </location>
</feature>
<feature type="splice variant" id="VSP_011425" description="In isoform 2." evidence="5">
    <location>
        <begin position="314"/>
        <end position="441"/>
    </location>
</feature>
<feature type="sequence variant" id="VAR_051103" description="In dbSNP:rs34613342.">
    <original>T</original>
    <variation>I</variation>
    <location>
        <position position="95"/>
    </location>
</feature>
<feature type="sequence variant" id="VAR_051104" description="In dbSNP:rs3800939.">
    <original>K</original>
    <variation>E</variation>
    <location>
        <position position="119"/>
    </location>
</feature>
<feature type="sequence variant" id="VAR_051105" description="In dbSNP:rs1057066." evidence="4">
    <original>G</original>
    <variation>A</variation>
    <location>
        <position position="187"/>
    </location>
</feature>
<feature type="sequence conflict" description="In Ref. 2; AAQ89248." evidence="6" ref="2">
    <location>
        <position position="214"/>
    </location>
</feature>